<accession>Q135J0</accession>
<dbReference type="EC" id="3.1.-.-" evidence="1"/>
<dbReference type="EMBL" id="CP000283">
    <property type="protein sequence ID" value="ABE40249.1"/>
    <property type="molecule type" value="Genomic_DNA"/>
</dbReference>
<dbReference type="SMR" id="Q135J0"/>
<dbReference type="STRING" id="316057.RPD_3023"/>
<dbReference type="KEGG" id="rpd:RPD_3023"/>
<dbReference type="eggNOG" id="COG0816">
    <property type="taxonomic scope" value="Bacteria"/>
</dbReference>
<dbReference type="HOGENOM" id="CLU_098240_1_1_5"/>
<dbReference type="BioCyc" id="RPAL316057:RPD_RS15180-MONOMER"/>
<dbReference type="Proteomes" id="UP000001818">
    <property type="component" value="Chromosome"/>
</dbReference>
<dbReference type="GO" id="GO:0005829">
    <property type="term" value="C:cytosol"/>
    <property type="evidence" value="ECO:0007669"/>
    <property type="project" value="TreeGrafter"/>
</dbReference>
<dbReference type="GO" id="GO:0004518">
    <property type="term" value="F:nuclease activity"/>
    <property type="evidence" value="ECO:0007669"/>
    <property type="project" value="UniProtKB-KW"/>
</dbReference>
<dbReference type="GO" id="GO:0000967">
    <property type="term" value="P:rRNA 5'-end processing"/>
    <property type="evidence" value="ECO:0007669"/>
    <property type="project" value="UniProtKB-UniRule"/>
</dbReference>
<dbReference type="CDD" id="cd16964">
    <property type="entry name" value="YqgF"/>
    <property type="match status" value="1"/>
</dbReference>
<dbReference type="Gene3D" id="3.30.420.140">
    <property type="entry name" value="YqgF/RNase H-like domain"/>
    <property type="match status" value="1"/>
</dbReference>
<dbReference type="HAMAP" id="MF_00651">
    <property type="entry name" value="Nuclease_YqgF"/>
    <property type="match status" value="1"/>
</dbReference>
<dbReference type="InterPro" id="IPR012337">
    <property type="entry name" value="RNaseH-like_sf"/>
</dbReference>
<dbReference type="InterPro" id="IPR005227">
    <property type="entry name" value="YqgF"/>
</dbReference>
<dbReference type="InterPro" id="IPR006641">
    <property type="entry name" value="YqgF/RNaseH-like_dom"/>
</dbReference>
<dbReference type="InterPro" id="IPR037027">
    <property type="entry name" value="YqgF/RNaseH-like_dom_sf"/>
</dbReference>
<dbReference type="NCBIfam" id="TIGR00250">
    <property type="entry name" value="RNAse_H_YqgF"/>
    <property type="match status" value="1"/>
</dbReference>
<dbReference type="PANTHER" id="PTHR33317">
    <property type="entry name" value="POLYNUCLEOTIDYL TRANSFERASE, RIBONUCLEASE H-LIKE SUPERFAMILY PROTEIN"/>
    <property type="match status" value="1"/>
</dbReference>
<dbReference type="PANTHER" id="PTHR33317:SF4">
    <property type="entry name" value="POLYNUCLEOTIDYL TRANSFERASE, RIBONUCLEASE H-LIKE SUPERFAMILY PROTEIN"/>
    <property type="match status" value="1"/>
</dbReference>
<dbReference type="Pfam" id="PF03652">
    <property type="entry name" value="RuvX"/>
    <property type="match status" value="1"/>
</dbReference>
<dbReference type="SMART" id="SM00732">
    <property type="entry name" value="YqgFc"/>
    <property type="match status" value="1"/>
</dbReference>
<dbReference type="SUPFAM" id="SSF53098">
    <property type="entry name" value="Ribonuclease H-like"/>
    <property type="match status" value="1"/>
</dbReference>
<gene>
    <name type="ordered locus">RPD_3023</name>
</gene>
<reference key="1">
    <citation type="submission" date="2006-03" db="EMBL/GenBank/DDBJ databases">
        <title>Complete sequence of Rhodopseudomonas palustris BisB5.</title>
        <authorList>
            <consortium name="US DOE Joint Genome Institute"/>
            <person name="Copeland A."/>
            <person name="Lucas S."/>
            <person name="Lapidus A."/>
            <person name="Barry K."/>
            <person name="Detter J.C."/>
            <person name="Glavina del Rio T."/>
            <person name="Hammon N."/>
            <person name="Israni S."/>
            <person name="Dalin E."/>
            <person name="Tice H."/>
            <person name="Pitluck S."/>
            <person name="Chain P."/>
            <person name="Malfatti S."/>
            <person name="Shin M."/>
            <person name="Vergez L."/>
            <person name="Schmutz J."/>
            <person name="Larimer F."/>
            <person name="Land M."/>
            <person name="Hauser L."/>
            <person name="Pelletier D.A."/>
            <person name="Kyrpides N."/>
            <person name="Lykidis A."/>
            <person name="Oda Y."/>
            <person name="Harwood C.S."/>
            <person name="Richardson P."/>
        </authorList>
    </citation>
    <scope>NUCLEOTIDE SEQUENCE [LARGE SCALE GENOMIC DNA]</scope>
    <source>
        <strain>BisB5</strain>
    </source>
</reference>
<sequence length="160" mass="16946">MPAPILPLIEAAAHWPARGALLGLDLGTKTIGVAVSDPDRKLATGIETVARTAFTADAKRVLALAAERSACGFVLGLPLNMDGSEGPRAQSTRAFARNFARLTELPIGLWDERLSTAAVERALIANDVSRAKRAKIIDEHAAIYILQGALDRLVALNRAG</sequence>
<proteinExistence type="inferred from homology"/>
<organism>
    <name type="scientific">Rhodopseudomonas palustris (strain BisB5)</name>
    <dbReference type="NCBI Taxonomy" id="316057"/>
    <lineage>
        <taxon>Bacteria</taxon>
        <taxon>Pseudomonadati</taxon>
        <taxon>Pseudomonadota</taxon>
        <taxon>Alphaproteobacteria</taxon>
        <taxon>Hyphomicrobiales</taxon>
        <taxon>Nitrobacteraceae</taxon>
        <taxon>Rhodopseudomonas</taxon>
    </lineage>
</organism>
<protein>
    <recommendedName>
        <fullName evidence="1">Putative pre-16S rRNA nuclease</fullName>
        <ecNumber evidence="1">3.1.-.-</ecNumber>
    </recommendedName>
</protein>
<keyword id="KW-0963">Cytoplasm</keyword>
<keyword id="KW-0378">Hydrolase</keyword>
<keyword id="KW-0540">Nuclease</keyword>
<keyword id="KW-0690">Ribosome biogenesis</keyword>
<evidence type="ECO:0000255" key="1">
    <source>
        <dbReference type="HAMAP-Rule" id="MF_00651"/>
    </source>
</evidence>
<comment type="function">
    <text evidence="1">Could be a nuclease involved in processing of the 5'-end of pre-16S rRNA.</text>
</comment>
<comment type="subcellular location">
    <subcellularLocation>
        <location evidence="1">Cytoplasm</location>
    </subcellularLocation>
</comment>
<comment type="similarity">
    <text evidence="1">Belongs to the YqgF nuclease family.</text>
</comment>
<name>YQGF_RHOPS</name>
<feature type="chain" id="PRO_1000061558" description="Putative pre-16S rRNA nuclease">
    <location>
        <begin position="1"/>
        <end position="160"/>
    </location>
</feature>